<reference key="1">
    <citation type="journal article" date="1998" name="J. Protein Chem.">
        <title>Amino acid sequence of piratoxin-I, a myotoxin from Bothrops pirajai snake venom, and its biological activity after alkylation with p-bromophenacyl bromide.</title>
        <authorList>
            <person name="Toyama M.H."/>
            <person name="Soares A.M."/>
            <person name="Vieira C.A."/>
            <person name="Novello J.C."/>
            <person name="Oliveira B."/>
            <person name="Giglio J.R."/>
            <person name="Marangoni S."/>
        </authorList>
    </citation>
    <scope>PROTEIN SEQUENCE</scope>
    <scope>TOXIC DOSE</scope>
    <scope>SUBCELLULAR LOCATION</scope>
    <source>
        <tissue>Venom</tissue>
    </source>
</reference>
<reference key="2">
    <citation type="journal article" date="1995" name="Toxicon">
        <title>Fractionation of Bothrops pirajai snake venom: isolation and characterization of piratoxin-I, a new myotoxic protein.</title>
        <authorList>
            <person name="Mancuso L.C."/>
            <person name="Correa M.M."/>
            <person name="Vieira C.A."/>
            <person name="Cunha O.A."/>
            <person name="Lachat J.J."/>
            <person name="de Araujo H.S."/>
            <person name="Ownby C.L."/>
            <person name="Giglio J.R."/>
        </authorList>
    </citation>
    <scope>PARTIAL PROTEIN SEQUENCE</scope>
    <scope>FUNCTION</scope>
    <scope>SUBCELLULAR LOCATION</scope>
</reference>
<reference key="3">
    <citation type="journal article" date="1998" name="Toxicon">
        <title>Crystal structure of piratoxin-I: a calcium-independent, myotoxic phospholipase A2-homologue from Bothrops pirajai venom.</title>
        <authorList>
            <person name="de Azevedo W.F. Jr."/>
            <person name="Ward R.J."/>
            <person name="Canduri F."/>
            <person name="Soares A."/>
            <person name="Giglio J.R."/>
            <person name="Arni R.K."/>
        </authorList>
    </citation>
    <scope>X-RAY CRYSTALLOGRAPHY (2.8 ANGSTROMS)</scope>
</reference>
<reference evidence="13" key="4">
    <citation type="journal article" date="2009" name="Biochim. Biophys. Acta">
        <title>Crystal structure of a phospholipase A(2) homolog complexed with p-bromophenacyl bromide reveals important structural changes associated with the inhibition of myotoxic activity.</title>
        <authorList>
            <person name="Marchi-Salvador D.P."/>
            <person name="Fernandes C.A."/>
            <person name="Silveira L.B."/>
            <person name="Soares A.M."/>
            <person name="Fontes M.R."/>
        </authorList>
    </citation>
    <scope>X-RAY CRYSTALLOGRAPHY (2.34 ANGSTROMS) OF 1-111 IN COMPLEX WITH THE PLA2 INHIBITOR BROMOPHENACYL BROMIDE</scope>
    <scope>DISULFIDE BONDS</scope>
    <source>
        <tissue>Venom</tissue>
    </source>
</reference>
<reference evidence="14" key="5">
    <citation type="journal article" date="2011" name="PLoS ONE">
        <title>Structural and functional studies of a bothropic myotoxin complexed to rosmarinic acid: new insights into Lys49-PLA(2) inhibition.</title>
        <authorList>
            <person name="Dos Santos J.I."/>
            <person name="Cardoso F.F."/>
            <person name="Soares A.M."/>
            <person name="Dal Pai Silva M."/>
            <person name="Gallacci M."/>
            <person name="Fontes M.R."/>
        </authorList>
    </citation>
    <scope>X-RAY CRYSTALLOGRAPHY (1.77 ANGSTROMS) IN COMPLEX WITH ROSMARINIC ACID</scope>
    <scope>FUNCTION</scope>
    <scope>DISULFIDE BONDS</scope>
    <source>
        <tissue>Venom</tissue>
    </source>
</reference>
<reference evidence="15 16" key="6">
    <citation type="journal article" date="2015" name="PLoS ONE">
        <title>Structural basis for the inhibition of a phospholipase a2-like toxin by caffeic and aristolochic acids.</title>
        <authorList>
            <person name="Fernandes C.A."/>
            <person name="Cardoso F.F."/>
            <person name="Cavalcante W.G."/>
            <person name="Soares A.M."/>
            <person name="Dal-Pai M."/>
            <person name="Gallacci M."/>
            <person name="Fontes M.R."/>
        </authorList>
    </citation>
    <scope>X-RAY CRYSTALLOGRAPHY (1.65 ANGSTROMS) IN COMPLEX WITH CAFFEIC ACID AND ARISTOLOCHIC ACID</scope>
    <scope>ACTIVITY REGULATION</scope>
    <source>
        <tissue>Venom</tissue>
    </source>
</reference>
<name>PA2H1_BOTPI</name>
<protein>
    <recommendedName>
        <fullName>Basic phospholipase A2 homolog piratoxin-1</fullName>
        <shortName>svPLA2 homolog</shortName>
    </recommendedName>
    <alternativeName>
        <fullName>Myotoxin SIV-SP5</fullName>
    </alternativeName>
    <alternativeName>
        <fullName evidence="8 9">Piratoxin-I</fullName>
        <shortName evidence="8 9">PrTX-I</shortName>
    </alternativeName>
</protein>
<organism>
    <name type="scientific">Bothrops pirajai</name>
    <name type="common">Piraja's lancehead</name>
    <dbReference type="NCBI Taxonomy" id="113192"/>
    <lineage>
        <taxon>Eukaryota</taxon>
        <taxon>Metazoa</taxon>
        <taxon>Chordata</taxon>
        <taxon>Craniata</taxon>
        <taxon>Vertebrata</taxon>
        <taxon>Euteleostomi</taxon>
        <taxon>Lepidosauria</taxon>
        <taxon>Squamata</taxon>
        <taxon>Bifurcata</taxon>
        <taxon>Unidentata</taxon>
        <taxon>Episquamata</taxon>
        <taxon>Toxicofera</taxon>
        <taxon>Serpentes</taxon>
        <taxon>Colubroidea</taxon>
        <taxon>Viperidae</taxon>
        <taxon>Crotalinae</taxon>
        <taxon>Bothrops</taxon>
    </lineage>
</organism>
<dbReference type="PDB" id="2OK9">
    <property type="method" value="X-ray"/>
    <property type="resolution" value="2.34 A"/>
    <property type="chains" value="A/B=1-121"/>
</dbReference>
<dbReference type="PDB" id="3QNL">
    <property type="method" value="X-ray"/>
    <property type="resolution" value="1.77 A"/>
    <property type="chains" value="A/B=1-121"/>
</dbReference>
<dbReference type="PDB" id="4YU7">
    <property type="method" value="X-ray"/>
    <property type="resolution" value="1.65 A"/>
    <property type="chains" value="A/B=1-121"/>
</dbReference>
<dbReference type="PDB" id="4YZ7">
    <property type="method" value="X-ray"/>
    <property type="resolution" value="1.96 A"/>
    <property type="chains" value="A/B=1-121"/>
</dbReference>
<dbReference type="PDB" id="8DND">
    <property type="method" value="X-ray"/>
    <property type="resolution" value="2.02 A"/>
    <property type="chains" value="A/B=1-121"/>
</dbReference>
<dbReference type="PDBsum" id="2OK9"/>
<dbReference type="PDBsum" id="3QNL"/>
<dbReference type="PDBsum" id="4YU7"/>
<dbReference type="PDBsum" id="4YZ7"/>
<dbReference type="PDBsum" id="8DND"/>
<dbReference type="SMR" id="P58399"/>
<dbReference type="BRENDA" id="3.1.1.4">
    <property type="organism ID" value="8187"/>
</dbReference>
<dbReference type="EvolutionaryTrace" id="P58399"/>
<dbReference type="GO" id="GO:0005576">
    <property type="term" value="C:extracellular region"/>
    <property type="evidence" value="ECO:0007669"/>
    <property type="project" value="UniProtKB-SubCell"/>
</dbReference>
<dbReference type="GO" id="GO:0005509">
    <property type="term" value="F:calcium ion binding"/>
    <property type="evidence" value="ECO:0007669"/>
    <property type="project" value="InterPro"/>
</dbReference>
<dbReference type="GO" id="GO:0047498">
    <property type="term" value="F:calcium-dependent phospholipase A2 activity"/>
    <property type="evidence" value="ECO:0007669"/>
    <property type="project" value="TreeGrafter"/>
</dbReference>
<dbReference type="GO" id="GO:0005543">
    <property type="term" value="F:phospholipid binding"/>
    <property type="evidence" value="ECO:0007669"/>
    <property type="project" value="TreeGrafter"/>
</dbReference>
<dbReference type="GO" id="GO:0090729">
    <property type="term" value="F:toxin activity"/>
    <property type="evidence" value="ECO:0007669"/>
    <property type="project" value="UniProtKB-KW"/>
</dbReference>
<dbReference type="GO" id="GO:0050482">
    <property type="term" value="P:arachidonate secretion"/>
    <property type="evidence" value="ECO:0007669"/>
    <property type="project" value="InterPro"/>
</dbReference>
<dbReference type="GO" id="GO:0016042">
    <property type="term" value="P:lipid catabolic process"/>
    <property type="evidence" value="ECO:0007669"/>
    <property type="project" value="InterPro"/>
</dbReference>
<dbReference type="GO" id="GO:0042130">
    <property type="term" value="P:negative regulation of T cell proliferation"/>
    <property type="evidence" value="ECO:0007669"/>
    <property type="project" value="TreeGrafter"/>
</dbReference>
<dbReference type="GO" id="GO:0006644">
    <property type="term" value="P:phospholipid metabolic process"/>
    <property type="evidence" value="ECO:0007669"/>
    <property type="project" value="InterPro"/>
</dbReference>
<dbReference type="CDD" id="cd00125">
    <property type="entry name" value="PLA2c"/>
    <property type="match status" value="1"/>
</dbReference>
<dbReference type="FunFam" id="1.20.90.10:FF:000001">
    <property type="entry name" value="Basic phospholipase A2 homolog"/>
    <property type="match status" value="1"/>
</dbReference>
<dbReference type="Gene3D" id="1.20.90.10">
    <property type="entry name" value="Phospholipase A2 domain"/>
    <property type="match status" value="1"/>
</dbReference>
<dbReference type="InterPro" id="IPR001211">
    <property type="entry name" value="PLipase_A2"/>
</dbReference>
<dbReference type="InterPro" id="IPR033112">
    <property type="entry name" value="PLipase_A2_Asp_AS"/>
</dbReference>
<dbReference type="InterPro" id="IPR016090">
    <property type="entry name" value="PLipase_A2_dom"/>
</dbReference>
<dbReference type="InterPro" id="IPR036444">
    <property type="entry name" value="PLipase_A2_dom_sf"/>
</dbReference>
<dbReference type="InterPro" id="IPR033113">
    <property type="entry name" value="PLipase_A2_His_AS"/>
</dbReference>
<dbReference type="PANTHER" id="PTHR11716">
    <property type="entry name" value="PHOSPHOLIPASE A2 FAMILY MEMBER"/>
    <property type="match status" value="1"/>
</dbReference>
<dbReference type="PANTHER" id="PTHR11716:SF9">
    <property type="entry name" value="PHOSPHOLIPASE A2, MEMBRANE ASSOCIATED"/>
    <property type="match status" value="1"/>
</dbReference>
<dbReference type="Pfam" id="PF00068">
    <property type="entry name" value="Phospholip_A2_1"/>
    <property type="match status" value="1"/>
</dbReference>
<dbReference type="PRINTS" id="PR00389">
    <property type="entry name" value="PHPHLIPASEA2"/>
</dbReference>
<dbReference type="SMART" id="SM00085">
    <property type="entry name" value="PA2c"/>
    <property type="match status" value="1"/>
</dbReference>
<dbReference type="SUPFAM" id="SSF48619">
    <property type="entry name" value="Phospholipase A2, PLA2"/>
    <property type="match status" value="1"/>
</dbReference>
<dbReference type="PROSITE" id="PS00119">
    <property type="entry name" value="PA2_ASP"/>
    <property type="match status" value="1"/>
</dbReference>
<dbReference type="PROSITE" id="PS00118">
    <property type="entry name" value="PA2_HIS"/>
    <property type="match status" value="1"/>
</dbReference>
<comment type="function">
    <text evidence="1 4 5 6">Snake venom phospholipase A2 (PLA2) homolog that lacks enzymatic activity (PubMed:7660366). Is myotoxic and displays edema-inducing activities (PubMed:7660366). Induces neuromuscular blockage (PubMed:26192963). A model of myotoxic mechanism has been proposed: an apo Lys49-PLA2 is activated by the entrance of a hydrophobic molecule (e.g. fatty acid) at the hydrophobic channel of the protein leading to a reorientation of a monomer (By similarity). This reorientation causes a transition between 'inactive' to 'active' states, causing alignment of C-terminal and membrane-docking sites (MDoS) side-by-side and putting the membrane-disruption sites (MDiS) in the same plane, exposed to solvent and in a symmetric position for both monomers (By similarity). The MDoS region stabilizes the toxin on membrane by the interaction of charged residues with phospholipid head groups (By similarity). Subsequently, the MDiS region destabilizes the membrane with penetration of hydrophobic residues (By similarity). This insertion causes a disorganization of the membrane, allowing an uncontrolled influx of ions (i.e. calcium and sodium), and eventually triggering irreversible intracellular alterations and cell death (By similarity).</text>
</comment>
<comment type="activity regulation">
    <text evidence="3 4 5">Rosmarinic acid inhibits the myotoxic activity (PubMed:22205953). Bromophenacyl bromide (BPB) inhibits the myotoxic activity through a covalent binding (PubMed:19616648). Caffeic acid and aristolochic acid, two plant compounds used in folk medicine used to treat envenomation, inhibit the myotoxic activity (PubMed:26192963).</text>
</comment>
<comment type="subunit">
    <text evidence="3 4">Homodimer; non-covalently linked.</text>
</comment>
<comment type="subcellular location">
    <subcellularLocation>
        <location evidence="6 7">Secreted</location>
    </subcellularLocation>
</comment>
<comment type="tissue specificity">
    <text evidence="11 12">Expressed by the venom gland.</text>
</comment>
<comment type="toxic dose">
    <text evidence="7">LD(50) is 8 mg/kg by intraperitoneal injection into mice.</text>
</comment>
<comment type="similarity">
    <text evidence="10">Belongs to the phospholipase A2 family. Group II subfamily. K49 sub-subfamily.</text>
</comment>
<comment type="caution">
    <text evidence="10">Does not bind calcium as one of the calcium-binding sites is lost (Asp-&gt;Lys in position 48, which corresponds to 'Lys-49' in the current nomenclature).</text>
</comment>
<proteinExistence type="evidence at protein level"/>
<accession>P58399</accession>
<keyword id="KW-0002">3D-structure</keyword>
<keyword id="KW-0903">Direct protein sequencing</keyword>
<keyword id="KW-1015">Disulfide bond</keyword>
<keyword id="KW-0959">Myotoxin</keyword>
<keyword id="KW-0528">Neurotoxin</keyword>
<keyword id="KW-0964">Secreted</keyword>
<keyword id="KW-0800">Toxin</keyword>
<sequence>SLFELGKMILQETGKNPAKSYGAYGCNCGVLGRGKPKDATDRCCYVHKCCYKKLTGCNPKKDRYSYSWKDKTIVCGENNPCLKELCECDKAVAICLRENLGTYNKLYRYHLKPFCKKADDC</sequence>
<evidence type="ECO:0000250" key="1">
    <source>
        <dbReference type="UniProtKB" id="I6L8L6"/>
    </source>
</evidence>
<evidence type="ECO:0000250" key="2">
    <source>
        <dbReference type="UniProtKB" id="P24605"/>
    </source>
</evidence>
<evidence type="ECO:0000269" key="3">
    <source>
    </source>
</evidence>
<evidence type="ECO:0000269" key="4">
    <source>
    </source>
</evidence>
<evidence type="ECO:0000269" key="5">
    <source>
    </source>
</evidence>
<evidence type="ECO:0000269" key="6">
    <source>
    </source>
</evidence>
<evidence type="ECO:0000269" key="7">
    <source>
    </source>
</evidence>
<evidence type="ECO:0000303" key="8">
    <source>
    </source>
</evidence>
<evidence type="ECO:0000303" key="9">
    <source>
    </source>
</evidence>
<evidence type="ECO:0000305" key="10"/>
<evidence type="ECO:0000305" key="11">
    <source>
    </source>
</evidence>
<evidence type="ECO:0000305" key="12">
    <source>
    </source>
</evidence>
<evidence type="ECO:0000312" key="13">
    <source>
        <dbReference type="PDB" id="2OK9"/>
    </source>
</evidence>
<evidence type="ECO:0000312" key="14">
    <source>
        <dbReference type="PDB" id="3QNL"/>
    </source>
</evidence>
<evidence type="ECO:0000312" key="15">
    <source>
        <dbReference type="PDB" id="4YU7"/>
    </source>
</evidence>
<evidence type="ECO:0000312" key="16">
    <source>
        <dbReference type="PDB" id="4YZ7"/>
    </source>
</evidence>
<evidence type="ECO:0007744" key="17">
    <source>
        <dbReference type="PDB" id="2OK9"/>
    </source>
</evidence>
<evidence type="ECO:0007744" key="18">
    <source>
        <dbReference type="PDB" id="3QNL"/>
    </source>
</evidence>
<evidence type="ECO:0007744" key="19">
    <source>
        <dbReference type="PDB" id="4YU7"/>
    </source>
</evidence>
<evidence type="ECO:0007744" key="20">
    <source>
        <dbReference type="PDB" id="4YZ7"/>
    </source>
</evidence>
<evidence type="ECO:0007829" key="21">
    <source>
        <dbReference type="PDB" id="4YU7"/>
    </source>
</evidence>
<evidence type="ECO:0007829" key="22">
    <source>
        <dbReference type="PDB" id="8DND"/>
    </source>
</evidence>
<feature type="chain" id="PRO_0000161627" description="Basic phospholipase A2 homolog piratoxin-1" evidence="7">
    <location>
        <begin position="1"/>
        <end position="121"/>
    </location>
</feature>
<feature type="region of interest" description="Important for membrane-damaging activities in eukaryotes and bacteria; heparin-binding" evidence="2">
    <location>
        <begin position="105"/>
        <end position="117"/>
    </location>
</feature>
<feature type="site" description="Important residue of the cationic membrane-docking site (MDoS)" evidence="1">
    <location>
        <position position="105"/>
    </location>
</feature>
<feature type="site" description="Important residue of the cationic membrane-docking site (MDoS)" evidence="1">
    <location>
        <position position="108"/>
    </location>
</feature>
<feature type="site" description="Hydrophobic membrane-disruption site (MDiS)" evidence="1">
    <location>
        <position position="111"/>
    </location>
</feature>
<feature type="site" description="Cationic membrane-docking site (MDoS)" evidence="1">
    <location>
        <position position="112"/>
    </location>
</feature>
<feature type="site" description="Hydrophobic membrane-disruption site (MDiS)" evidence="1">
    <location>
        <position position="114"/>
    </location>
</feature>
<feature type="site" description="Cationic membrane-docking site (MDoS)" evidence="1">
    <location>
        <position position="117"/>
    </location>
</feature>
<feature type="disulfide bond" evidence="3 4 5 17 18 19 20">
    <location>
        <begin position="26"/>
        <end position="115"/>
    </location>
</feature>
<feature type="disulfide bond" evidence="3 4 5 17 18 19 20">
    <location>
        <begin position="28"/>
        <end position="44"/>
    </location>
</feature>
<feature type="disulfide bond" evidence="3 4 5 17 18 19 20">
    <location>
        <begin position="43"/>
        <end position="95"/>
    </location>
</feature>
<feature type="disulfide bond" evidence="3 4 5 17 18 19 20">
    <location>
        <begin position="49"/>
        <end position="121"/>
    </location>
</feature>
<feature type="disulfide bond" evidence="3 4 5 17 18 19 20">
    <location>
        <begin position="50"/>
        <end position="88"/>
    </location>
</feature>
<feature type="disulfide bond" evidence="3 4 5 17 18 19 20">
    <location>
        <begin position="57"/>
        <end position="81"/>
    </location>
</feature>
<feature type="disulfide bond" evidence="3 4 5 17 18 19 20">
    <location>
        <begin position="75"/>
        <end position="86"/>
    </location>
</feature>
<feature type="helix" evidence="21">
    <location>
        <begin position="2"/>
        <end position="13"/>
    </location>
</feature>
<feature type="helix" evidence="21">
    <location>
        <begin position="17"/>
        <end position="21"/>
    </location>
</feature>
<feature type="strand" evidence="22">
    <location>
        <begin position="22"/>
        <end position="24"/>
    </location>
</feature>
<feature type="turn" evidence="21">
    <location>
        <begin position="25"/>
        <end position="27"/>
    </location>
</feature>
<feature type="strand" evidence="21">
    <location>
        <begin position="28"/>
        <end position="31"/>
    </location>
</feature>
<feature type="helix" evidence="21">
    <location>
        <begin position="39"/>
        <end position="52"/>
    </location>
</feature>
<feature type="turn" evidence="21">
    <location>
        <begin position="59"/>
        <end position="61"/>
    </location>
</feature>
<feature type="strand" evidence="21">
    <location>
        <begin position="66"/>
        <end position="69"/>
    </location>
</feature>
<feature type="strand" evidence="21">
    <location>
        <begin position="72"/>
        <end position="75"/>
    </location>
</feature>
<feature type="helix" evidence="21">
    <location>
        <begin position="80"/>
        <end position="98"/>
    </location>
</feature>
<feature type="helix" evidence="21">
    <location>
        <begin position="99"/>
        <end position="102"/>
    </location>
</feature>
<feature type="helix" evidence="21">
    <location>
        <begin position="105"/>
        <end position="107"/>
    </location>
</feature>
<feature type="helix" evidence="21">
    <location>
        <begin position="112"/>
        <end position="114"/>
    </location>
</feature>